<dbReference type="EMBL" id="CP000282">
    <property type="protein sequence ID" value="ABD81011.1"/>
    <property type="molecule type" value="Genomic_DNA"/>
</dbReference>
<dbReference type="RefSeq" id="WP_011468231.1">
    <property type="nucleotide sequence ID" value="NC_007912.1"/>
</dbReference>
<dbReference type="SMR" id="Q21JW8"/>
<dbReference type="STRING" id="203122.Sde_1751"/>
<dbReference type="GeneID" id="98613424"/>
<dbReference type="KEGG" id="sde:Sde_1751"/>
<dbReference type="eggNOG" id="COG3130">
    <property type="taxonomic scope" value="Bacteria"/>
</dbReference>
<dbReference type="HOGENOM" id="CLU_203350_0_0_6"/>
<dbReference type="OrthoDB" id="5917763at2"/>
<dbReference type="Proteomes" id="UP000001947">
    <property type="component" value="Chromosome"/>
</dbReference>
<dbReference type="GO" id="GO:0005737">
    <property type="term" value="C:cytoplasm"/>
    <property type="evidence" value="ECO:0007669"/>
    <property type="project" value="UniProtKB-SubCell"/>
</dbReference>
<dbReference type="GO" id="GO:0006417">
    <property type="term" value="P:regulation of translation"/>
    <property type="evidence" value="ECO:0007669"/>
    <property type="project" value="UniProtKB-UniRule"/>
</dbReference>
<dbReference type="Gene3D" id="1.10.10.620">
    <property type="entry name" value="ribosome modulation factor like domain"/>
    <property type="match status" value="1"/>
</dbReference>
<dbReference type="HAMAP" id="MF_00919">
    <property type="entry name" value="RMF"/>
    <property type="match status" value="1"/>
</dbReference>
<dbReference type="InterPro" id="IPR007040">
    <property type="entry name" value="Ribosome_modulation_factor"/>
</dbReference>
<dbReference type="InterPro" id="IPR023200">
    <property type="entry name" value="RMF_sf"/>
</dbReference>
<dbReference type="NCBIfam" id="NF011162">
    <property type="entry name" value="PRK14563.1"/>
    <property type="match status" value="1"/>
</dbReference>
<dbReference type="NCBIfam" id="NF041886">
    <property type="entry name" value="Rmf_CrpP_fam"/>
    <property type="match status" value="1"/>
</dbReference>
<dbReference type="Pfam" id="PF04957">
    <property type="entry name" value="RMF"/>
    <property type="match status" value="1"/>
</dbReference>
<proteinExistence type="inferred from homology"/>
<comment type="function">
    <text evidence="1">During stationary phase, converts 70S ribosomes to an inactive dimeric form (100S ribosomes).</text>
</comment>
<comment type="subcellular location">
    <subcellularLocation>
        <location evidence="1">Cytoplasm</location>
    </subcellularLocation>
</comment>
<comment type="similarity">
    <text evidence="1">Belongs to the ribosome modulation factor family.</text>
</comment>
<organism>
    <name type="scientific">Saccharophagus degradans (strain 2-40 / ATCC 43961 / DSM 17024)</name>
    <dbReference type="NCBI Taxonomy" id="203122"/>
    <lineage>
        <taxon>Bacteria</taxon>
        <taxon>Pseudomonadati</taxon>
        <taxon>Pseudomonadota</taxon>
        <taxon>Gammaproteobacteria</taxon>
        <taxon>Cellvibrionales</taxon>
        <taxon>Cellvibrionaceae</taxon>
        <taxon>Saccharophagus</taxon>
    </lineage>
</organism>
<sequence length="68" mass="7902">MKRQKRDHTSRAFTRGYQAGVEGRSRSLCPHSTGEIKQSWLTGWREGREDHWNGFNTLAQVQRISNIS</sequence>
<feature type="chain" id="PRO_0000416480" description="Ribosome modulation factor">
    <location>
        <begin position="1"/>
        <end position="68"/>
    </location>
</feature>
<protein>
    <recommendedName>
        <fullName evidence="1">Ribosome modulation factor</fullName>
        <shortName evidence="1">RMF</shortName>
    </recommendedName>
</protein>
<accession>Q21JW8</accession>
<evidence type="ECO:0000255" key="1">
    <source>
        <dbReference type="HAMAP-Rule" id="MF_00919"/>
    </source>
</evidence>
<gene>
    <name evidence="1" type="primary">rmf</name>
    <name type="ordered locus">Sde_1751</name>
</gene>
<keyword id="KW-0963">Cytoplasm</keyword>
<keyword id="KW-1185">Reference proteome</keyword>
<keyword id="KW-0810">Translation regulation</keyword>
<reference key="1">
    <citation type="journal article" date="2008" name="PLoS Genet.">
        <title>Complete genome sequence of the complex carbohydrate-degrading marine bacterium, Saccharophagus degradans strain 2-40 T.</title>
        <authorList>
            <person name="Weiner R.M."/>
            <person name="Taylor L.E. II"/>
            <person name="Henrissat B."/>
            <person name="Hauser L."/>
            <person name="Land M."/>
            <person name="Coutinho P.M."/>
            <person name="Rancurel C."/>
            <person name="Saunders E.H."/>
            <person name="Longmire A.G."/>
            <person name="Zhang H."/>
            <person name="Bayer E.A."/>
            <person name="Gilbert H.J."/>
            <person name="Larimer F."/>
            <person name="Zhulin I.B."/>
            <person name="Ekborg N.A."/>
            <person name="Lamed R."/>
            <person name="Richardson P.M."/>
            <person name="Borovok I."/>
            <person name="Hutcheson S."/>
        </authorList>
    </citation>
    <scope>NUCLEOTIDE SEQUENCE [LARGE SCALE GENOMIC DNA]</scope>
    <source>
        <strain>2-40 / ATCC 43961 / DSM 17024</strain>
    </source>
</reference>
<name>RMF_SACD2</name>